<accession>P41658</accession>
<dbReference type="EMBL" id="L22858">
    <property type="protein sequence ID" value="AAA66729.1"/>
    <property type="molecule type" value="Genomic_DNA"/>
</dbReference>
<dbReference type="EMBL" id="M57687">
    <property type="protein sequence ID" value="AAA67906.1"/>
    <property type="molecule type" value="Genomic_DNA"/>
</dbReference>
<dbReference type="PIR" id="D72862">
    <property type="entry name" value="D72862"/>
</dbReference>
<dbReference type="KEGG" id="vg:1403932"/>
<dbReference type="OrthoDB" id="12882at10239"/>
<dbReference type="Proteomes" id="UP000008292">
    <property type="component" value="Segment"/>
</dbReference>
<dbReference type="GO" id="GO:0042025">
    <property type="term" value="C:host cell nucleus"/>
    <property type="evidence" value="ECO:0007669"/>
    <property type="project" value="UniProtKB-SubCell"/>
</dbReference>
<dbReference type="GO" id="GO:0039695">
    <property type="term" value="P:DNA-templated viral transcription"/>
    <property type="evidence" value="ECO:0000314"/>
    <property type="project" value="UniProtKB"/>
</dbReference>
<dbReference type="GO" id="GO:0006355">
    <property type="term" value="P:regulation of DNA-templated transcription"/>
    <property type="evidence" value="ECO:0007669"/>
    <property type="project" value="InterPro"/>
</dbReference>
<dbReference type="InterPro" id="IPR021758">
    <property type="entry name" value="Baculo_LEF5_C"/>
</dbReference>
<dbReference type="InterPro" id="IPR006923">
    <property type="entry name" value="Baculo_LEF5_N"/>
</dbReference>
<dbReference type="Pfam" id="PF04838">
    <property type="entry name" value="Baculo_LEF5"/>
    <property type="match status" value="1"/>
</dbReference>
<dbReference type="Pfam" id="PF11792">
    <property type="entry name" value="Baculo_LEF5_C"/>
    <property type="match status" value="1"/>
</dbReference>
<keyword id="KW-1048">Host nucleus</keyword>
<keyword id="KW-1185">Reference proteome</keyword>
<keyword id="KW-0804">Transcription</keyword>
<keyword id="KW-0805">Transcription regulation</keyword>
<feature type="chain" id="PRO_0000132826" description="Late expression factor 5">
    <location>
        <begin position="1"/>
        <end position="265"/>
    </location>
</feature>
<feature type="sequence conflict" description="In Ref. 2; AAA67906." evidence="4" ref="2">
    <original>GVDCCCPCQLLHKSLLNTKNY</original>
    <variation>ASIAVVRASYCTRVYSTPKIN</variation>
    <location>
        <begin position="127"/>
        <end position="147"/>
    </location>
</feature>
<feature type="sequence conflict" description="In Ref. 2; AAA67906." evidence="4" ref="2">
    <original>S</original>
    <variation>N</variation>
    <location>
        <position position="229"/>
    </location>
</feature>
<feature type="sequence conflict" description="In Ref. 2; AAA67906." evidence="4" ref="2">
    <original>S</original>
    <variation>F</variation>
    <location>
        <position position="263"/>
    </location>
</feature>
<gene>
    <name type="primary">LEF-5</name>
</gene>
<organismHost>
    <name type="scientific">Lepidoptera</name>
    <name type="common">butterflies and moths</name>
    <dbReference type="NCBI Taxonomy" id="7088"/>
</organismHost>
<name>LEF5_NPVAC</name>
<organism>
    <name type="scientific">Autographa californica nuclear polyhedrosis virus</name>
    <name type="common">AcMNPV</name>
    <dbReference type="NCBI Taxonomy" id="46015"/>
    <lineage>
        <taxon>Viruses</taxon>
        <taxon>Viruses incertae sedis</taxon>
        <taxon>Naldaviricetes</taxon>
        <taxon>Lefavirales</taxon>
        <taxon>Baculoviridae</taxon>
        <taxon>Alphabaculovirus</taxon>
        <taxon>Alphabaculovirus aucalifornicae</taxon>
    </lineage>
</organism>
<proteinExistence type="evidence at protein level"/>
<reference key="1">
    <citation type="journal article" date="1994" name="Virology">
        <title>The complete DNA sequence of Autographa californica nuclear polyhedrosis virus.</title>
        <authorList>
            <person name="Ayres M.D."/>
            <person name="Howard S.C."/>
            <person name="Kuzio J."/>
            <person name="Lopez-Ferber M."/>
            <person name="Possee R.D."/>
        </authorList>
    </citation>
    <scope>NUCLEOTIDE SEQUENCE [LARGE SCALE GENOMIC DNA]</scope>
    <source>
        <strain>C6</strain>
    </source>
</reference>
<reference key="2">
    <citation type="journal article" date="1991" name="Virology">
        <title>Nucleotide sequence of a gene essential for viral DNA replication in the baculovirus Autographa californica nuclear polyhedrosis virus.</title>
        <authorList>
            <person name="Lu A."/>
            <person name="Carstens E.B."/>
        </authorList>
    </citation>
    <scope>NUCLEOTIDE SEQUENCE [GENOMIC DNA]</scope>
    <source>
        <strain>HR3</strain>
    </source>
</reference>
<reference key="3">
    <citation type="journal article" date="1993" name="Virology">
        <title>Identification of genes encoding late expression factors located between 56.0 and 65.4 map units of the Autographa californica nuclear polyhedrosis virus genome.</title>
        <authorList>
            <person name="Passarelli A.L."/>
            <person name="Miller L.K."/>
        </authorList>
    </citation>
    <scope>CHARACTERIZATION</scope>
</reference>
<reference key="4">
    <citation type="journal article" date="1998" name="Virology">
        <title>AcMNPV late expression factor-5 interacts with itself and contains a zinc ribbon domain that is required for maximal late transcription activity and is homologous to elongation factor TFIIS.</title>
        <authorList>
            <person name="Harwood S.H."/>
            <person name="Li L."/>
            <person name="Ho P.S."/>
            <person name="Preston A.K."/>
            <person name="Rohrmann G.F."/>
        </authorList>
    </citation>
    <scope>SUBUNIT</scope>
</reference>
<reference key="5">
    <citation type="journal article" date="2002" name="J. Virol.">
        <title>In vitro activity of the baculovirus late expression factor LEF-5.</title>
        <authorList>
            <person name="Guarino L.A."/>
            <person name="Dong W."/>
            <person name="Jin J."/>
        </authorList>
    </citation>
    <scope>FUNCTION</scope>
</reference>
<reference key="6">
    <citation type="journal article" date="2011" name="Virology">
        <title>The Autographa californica multiple nucleopolyhedrovirus lef-5 gene is required for productive infection.</title>
        <authorList>
            <person name="Su J."/>
            <person name="Lung O."/>
            <person name="Blissard G.W."/>
        </authorList>
    </citation>
    <scope>FUNCTION</scope>
    <scope>SUBCELLULAR LOCATION</scope>
</reference>
<protein>
    <recommendedName>
        <fullName>Late expression factor 5</fullName>
    </recommendedName>
</protein>
<comment type="function">
    <text evidence="1 2">Plays a role in the transcription of late viral genes. May function as an transcriptional initiation factor.</text>
</comment>
<comment type="subunit">
    <text evidence="3">Interacts (via N-terminus) with itself.</text>
</comment>
<comment type="subcellular location">
    <subcellularLocation>
        <location evidence="2">Host nucleus</location>
    </subcellularLocation>
    <text evidence="2">Co-localizes with IE1 in the nucleus of infected cells.</text>
</comment>
<comment type="similarity">
    <text evidence="4">Belongs to the baculoviridae LEF-5 family.</text>
</comment>
<sequence length="265" mass="31010">MSFDDGVVKAQTDPFALKRGGHNVQKWTSYALFKLFKEFRINKNYSKLIDFLTENFPNNVKNKTFNFSSTGHLFHSLHAYVPSVSDLVKERKQIRLQTEYLAKLFNNTINDFKLYTELYEFIERTEGVDCCCPCQLLHKSLLNTKNYVENLNCKLFDIKPPKFKKEPFDNILYKYSLNYKSLLLKKKEKHTSTGCTRKKKIKHRQILNDKVIYLQNSNKNKLFELSGLSLKSCRHDFVTVESQTRAGDEIASFIRYCRLCGMSGC</sequence>
<evidence type="ECO:0000269" key="1">
    <source>
    </source>
</evidence>
<evidence type="ECO:0000269" key="2">
    <source>
    </source>
</evidence>
<evidence type="ECO:0000269" key="3">
    <source>
    </source>
</evidence>
<evidence type="ECO:0000305" key="4"/>